<keyword id="KW-0030">Aminoacyl-tRNA synthetase</keyword>
<keyword id="KW-0067">ATP-binding</keyword>
<keyword id="KW-0963">Cytoplasm</keyword>
<keyword id="KW-0436">Ligase</keyword>
<keyword id="KW-0479">Metal-binding</keyword>
<keyword id="KW-0547">Nucleotide-binding</keyword>
<keyword id="KW-0648">Protein biosynthesis</keyword>
<keyword id="KW-1185">Reference proteome</keyword>
<keyword id="KW-0694">RNA-binding</keyword>
<keyword id="KW-0820">tRNA-binding</keyword>
<keyword id="KW-0862">Zinc</keyword>
<reference key="1">
    <citation type="submission" date="2007-05" db="EMBL/GenBank/DDBJ databases">
        <title>Complete sequence of chromosome of Acidiphilium cryptum JF-5.</title>
        <authorList>
            <consortium name="US DOE Joint Genome Institute"/>
            <person name="Copeland A."/>
            <person name="Lucas S."/>
            <person name="Lapidus A."/>
            <person name="Barry K."/>
            <person name="Detter J.C."/>
            <person name="Glavina del Rio T."/>
            <person name="Hammon N."/>
            <person name="Israni S."/>
            <person name="Dalin E."/>
            <person name="Tice H."/>
            <person name="Pitluck S."/>
            <person name="Sims D."/>
            <person name="Brettin T."/>
            <person name="Bruce D."/>
            <person name="Han C."/>
            <person name="Schmutz J."/>
            <person name="Larimer F."/>
            <person name="Land M."/>
            <person name="Hauser L."/>
            <person name="Kyrpides N."/>
            <person name="Kim E."/>
            <person name="Magnuson T."/>
            <person name="Richardson P."/>
        </authorList>
    </citation>
    <scope>NUCLEOTIDE SEQUENCE [LARGE SCALE GENOMIC DNA]</scope>
    <source>
        <strain>JF-5</strain>
    </source>
</reference>
<comment type="function">
    <text evidence="1">Catalyzes the attachment of threonine to tRNA(Thr) in a two-step reaction: L-threonine is first activated by ATP to form Thr-AMP and then transferred to the acceptor end of tRNA(Thr). Also edits incorrectly charged L-seryl-tRNA(Thr).</text>
</comment>
<comment type="catalytic activity">
    <reaction evidence="1">
        <text>tRNA(Thr) + L-threonine + ATP = L-threonyl-tRNA(Thr) + AMP + diphosphate + H(+)</text>
        <dbReference type="Rhea" id="RHEA:24624"/>
        <dbReference type="Rhea" id="RHEA-COMP:9670"/>
        <dbReference type="Rhea" id="RHEA-COMP:9704"/>
        <dbReference type="ChEBI" id="CHEBI:15378"/>
        <dbReference type="ChEBI" id="CHEBI:30616"/>
        <dbReference type="ChEBI" id="CHEBI:33019"/>
        <dbReference type="ChEBI" id="CHEBI:57926"/>
        <dbReference type="ChEBI" id="CHEBI:78442"/>
        <dbReference type="ChEBI" id="CHEBI:78534"/>
        <dbReference type="ChEBI" id="CHEBI:456215"/>
        <dbReference type="EC" id="6.1.1.3"/>
    </reaction>
</comment>
<comment type="cofactor">
    <cofactor evidence="1">
        <name>Zn(2+)</name>
        <dbReference type="ChEBI" id="CHEBI:29105"/>
    </cofactor>
    <text evidence="1">Binds 1 zinc ion per subunit.</text>
</comment>
<comment type="subunit">
    <text evidence="1">Homodimer.</text>
</comment>
<comment type="subcellular location">
    <subcellularLocation>
        <location evidence="1">Cytoplasm</location>
    </subcellularLocation>
</comment>
<comment type="similarity">
    <text evidence="1">Belongs to the class-II aminoacyl-tRNA synthetase family.</text>
</comment>
<proteinExistence type="inferred from homology"/>
<protein>
    <recommendedName>
        <fullName evidence="1">Threonine--tRNA ligase</fullName>
        <ecNumber evidence="1">6.1.1.3</ecNumber>
    </recommendedName>
    <alternativeName>
        <fullName evidence="1">Threonyl-tRNA synthetase</fullName>
        <shortName evidence="1">ThrRS</shortName>
    </alternativeName>
</protein>
<accession>A5G0L2</accession>
<name>SYT_ACICJ</name>
<sequence length="640" mass="72272">MPAITLPDGSVRDYPGPVTGTEIAASIGPGLAKAALAMEVDGKMMDLSRTLDADARLRFITRRDADSLELIRHDAAHVMAEAVQALYPGTQVTIGPAIEGGFYYDFFRNEPFTPDDLPAIEAKMREIIAANAPFTREVWDRDEAIRFFEARGERFKAELIRDLPASETITIYRQGDWLDLCRGPHMRGTGDIGGAFKLTKVAGAYWRGDHRNPMLSRIYGTAWRDQKELDAHLKQLEEAERRDHRKIGRQMDLFHMQEEAVGSVFWHEKGWRLYRTVEAYMRRRQEEFGYIEVRTPQLLDRKLWEASGHWDNYRSHMFIAEVEDEDKVLAVKPMNCPCHVQIFNHGLRSYRELPLRMAEFGACHRYEPSGALHGIMRVRAFAQDDAHIFCTEDQIADETVRFVEMLRRVYADFGFPEFAVKFADRPTPRSGSDEVWDKAEAALRSACETAGVEFTVNPGEGAFYGPKLEFVLRDAIGRDWQCGTLQVDFVLPERLDASYVTAESGRARPVMLHRAIVGSFERFIGILIENCAGRFPLWLAPTQAAVASIVTDANDYAETVAARLKEAGLAVATDTRNEKINAKVRDLSLALVPNILVVGRREAEQQTVSIRRLGSDKQDSMTLDEAIATLKAEATPPDLR</sequence>
<evidence type="ECO:0000255" key="1">
    <source>
        <dbReference type="HAMAP-Rule" id="MF_00184"/>
    </source>
</evidence>
<evidence type="ECO:0000255" key="2">
    <source>
        <dbReference type="PROSITE-ProRule" id="PRU01228"/>
    </source>
</evidence>
<organism>
    <name type="scientific">Acidiphilium cryptum (strain JF-5)</name>
    <dbReference type="NCBI Taxonomy" id="349163"/>
    <lineage>
        <taxon>Bacteria</taxon>
        <taxon>Pseudomonadati</taxon>
        <taxon>Pseudomonadota</taxon>
        <taxon>Alphaproteobacteria</taxon>
        <taxon>Acetobacterales</taxon>
        <taxon>Acidocellaceae</taxon>
        <taxon>Acidiphilium</taxon>
    </lineage>
</organism>
<gene>
    <name evidence="1" type="primary">thrS</name>
    <name type="ordered locus">Acry_2196</name>
</gene>
<feature type="chain" id="PRO_1000020330" description="Threonine--tRNA ligase">
    <location>
        <begin position="1"/>
        <end position="640"/>
    </location>
</feature>
<feature type="domain" description="TGS" evidence="2">
    <location>
        <begin position="1"/>
        <end position="61"/>
    </location>
</feature>
<feature type="region of interest" description="Catalytic" evidence="1">
    <location>
        <begin position="243"/>
        <end position="536"/>
    </location>
</feature>
<feature type="binding site" evidence="1">
    <location>
        <position position="336"/>
    </location>
    <ligand>
        <name>Zn(2+)</name>
        <dbReference type="ChEBI" id="CHEBI:29105"/>
    </ligand>
</feature>
<feature type="binding site" evidence="1">
    <location>
        <position position="387"/>
    </location>
    <ligand>
        <name>Zn(2+)</name>
        <dbReference type="ChEBI" id="CHEBI:29105"/>
    </ligand>
</feature>
<feature type="binding site" evidence="1">
    <location>
        <position position="513"/>
    </location>
    <ligand>
        <name>Zn(2+)</name>
        <dbReference type="ChEBI" id="CHEBI:29105"/>
    </ligand>
</feature>
<dbReference type="EC" id="6.1.1.3" evidence="1"/>
<dbReference type="EMBL" id="CP000697">
    <property type="protein sequence ID" value="ABQ31394.1"/>
    <property type="molecule type" value="Genomic_DNA"/>
</dbReference>
<dbReference type="RefSeq" id="WP_012039871.1">
    <property type="nucleotide sequence ID" value="NC_009484.1"/>
</dbReference>
<dbReference type="SMR" id="A5G0L2"/>
<dbReference type="STRING" id="349163.Acry_2196"/>
<dbReference type="KEGG" id="acr:Acry_2196"/>
<dbReference type="eggNOG" id="COG0441">
    <property type="taxonomic scope" value="Bacteria"/>
</dbReference>
<dbReference type="HOGENOM" id="CLU_008554_0_1_5"/>
<dbReference type="Proteomes" id="UP000000245">
    <property type="component" value="Chromosome"/>
</dbReference>
<dbReference type="GO" id="GO:0005737">
    <property type="term" value="C:cytoplasm"/>
    <property type="evidence" value="ECO:0007669"/>
    <property type="project" value="UniProtKB-SubCell"/>
</dbReference>
<dbReference type="GO" id="GO:0005524">
    <property type="term" value="F:ATP binding"/>
    <property type="evidence" value="ECO:0007669"/>
    <property type="project" value="UniProtKB-UniRule"/>
</dbReference>
<dbReference type="GO" id="GO:0046872">
    <property type="term" value="F:metal ion binding"/>
    <property type="evidence" value="ECO:0007669"/>
    <property type="project" value="UniProtKB-KW"/>
</dbReference>
<dbReference type="GO" id="GO:0004829">
    <property type="term" value="F:threonine-tRNA ligase activity"/>
    <property type="evidence" value="ECO:0007669"/>
    <property type="project" value="UniProtKB-UniRule"/>
</dbReference>
<dbReference type="GO" id="GO:0000049">
    <property type="term" value="F:tRNA binding"/>
    <property type="evidence" value="ECO:0007669"/>
    <property type="project" value="UniProtKB-KW"/>
</dbReference>
<dbReference type="GO" id="GO:0006435">
    <property type="term" value="P:threonyl-tRNA aminoacylation"/>
    <property type="evidence" value="ECO:0007669"/>
    <property type="project" value="UniProtKB-UniRule"/>
</dbReference>
<dbReference type="CDD" id="cd01667">
    <property type="entry name" value="TGS_ThrRS"/>
    <property type="match status" value="1"/>
</dbReference>
<dbReference type="CDD" id="cd00860">
    <property type="entry name" value="ThrRS_anticodon"/>
    <property type="match status" value="1"/>
</dbReference>
<dbReference type="CDD" id="cd00771">
    <property type="entry name" value="ThrRS_core"/>
    <property type="match status" value="1"/>
</dbReference>
<dbReference type="FunFam" id="3.10.20.30:FF:000005">
    <property type="entry name" value="Threonine--tRNA ligase"/>
    <property type="match status" value="1"/>
</dbReference>
<dbReference type="FunFam" id="3.30.54.20:FF:000002">
    <property type="entry name" value="Threonine--tRNA ligase"/>
    <property type="match status" value="1"/>
</dbReference>
<dbReference type="FunFam" id="3.30.930.10:FF:000002">
    <property type="entry name" value="Threonine--tRNA ligase"/>
    <property type="match status" value="1"/>
</dbReference>
<dbReference type="FunFam" id="3.40.50.800:FF:000001">
    <property type="entry name" value="Threonine--tRNA ligase"/>
    <property type="match status" value="1"/>
</dbReference>
<dbReference type="FunFam" id="3.30.980.10:FF:000005">
    <property type="entry name" value="Threonyl-tRNA synthetase, mitochondrial"/>
    <property type="match status" value="1"/>
</dbReference>
<dbReference type="Gene3D" id="3.10.20.30">
    <property type="match status" value="1"/>
</dbReference>
<dbReference type="Gene3D" id="3.30.54.20">
    <property type="match status" value="1"/>
</dbReference>
<dbReference type="Gene3D" id="3.40.50.800">
    <property type="entry name" value="Anticodon-binding domain"/>
    <property type="match status" value="1"/>
</dbReference>
<dbReference type="Gene3D" id="3.30.930.10">
    <property type="entry name" value="Bira Bifunctional Protein, Domain 2"/>
    <property type="match status" value="1"/>
</dbReference>
<dbReference type="Gene3D" id="3.30.980.10">
    <property type="entry name" value="Threonyl-trna Synthetase, Chain A, domain 2"/>
    <property type="match status" value="1"/>
</dbReference>
<dbReference type="HAMAP" id="MF_00184">
    <property type="entry name" value="Thr_tRNA_synth"/>
    <property type="match status" value="1"/>
</dbReference>
<dbReference type="InterPro" id="IPR002314">
    <property type="entry name" value="aa-tRNA-synt_IIb"/>
</dbReference>
<dbReference type="InterPro" id="IPR006195">
    <property type="entry name" value="aa-tRNA-synth_II"/>
</dbReference>
<dbReference type="InterPro" id="IPR045864">
    <property type="entry name" value="aa-tRNA-synth_II/BPL/LPL"/>
</dbReference>
<dbReference type="InterPro" id="IPR004154">
    <property type="entry name" value="Anticodon-bd"/>
</dbReference>
<dbReference type="InterPro" id="IPR036621">
    <property type="entry name" value="Anticodon-bd_dom_sf"/>
</dbReference>
<dbReference type="InterPro" id="IPR012675">
    <property type="entry name" value="Beta-grasp_dom_sf"/>
</dbReference>
<dbReference type="InterPro" id="IPR004095">
    <property type="entry name" value="TGS"/>
</dbReference>
<dbReference type="InterPro" id="IPR012676">
    <property type="entry name" value="TGS-like"/>
</dbReference>
<dbReference type="InterPro" id="IPR002320">
    <property type="entry name" value="Thr-tRNA-ligase_IIa"/>
</dbReference>
<dbReference type="InterPro" id="IPR018163">
    <property type="entry name" value="Thr/Ala-tRNA-synth_IIc_edit"/>
</dbReference>
<dbReference type="InterPro" id="IPR047246">
    <property type="entry name" value="ThrRS_anticodon"/>
</dbReference>
<dbReference type="InterPro" id="IPR033728">
    <property type="entry name" value="ThrRS_core"/>
</dbReference>
<dbReference type="InterPro" id="IPR012947">
    <property type="entry name" value="tRNA_SAD"/>
</dbReference>
<dbReference type="NCBIfam" id="TIGR00418">
    <property type="entry name" value="thrS"/>
    <property type="match status" value="1"/>
</dbReference>
<dbReference type="PANTHER" id="PTHR11451:SF44">
    <property type="entry name" value="THREONINE--TRNA LIGASE, CHLOROPLASTIC_MITOCHONDRIAL 2"/>
    <property type="match status" value="1"/>
</dbReference>
<dbReference type="PANTHER" id="PTHR11451">
    <property type="entry name" value="THREONINE-TRNA LIGASE"/>
    <property type="match status" value="1"/>
</dbReference>
<dbReference type="Pfam" id="PF03129">
    <property type="entry name" value="HGTP_anticodon"/>
    <property type="match status" value="1"/>
</dbReference>
<dbReference type="Pfam" id="PF02824">
    <property type="entry name" value="TGS"/>
    <property type="match status" value="1"/>
</dbReference>
<dbReference type="Pfam" id="PF00587">
    <property type="entry name" value="tRNA-synt_2b"/>
    <property type="match status" value="1"/>
</dbReference>
<dbReference type="Pfam" id="PF07973">
    <property type="entry name" value="tRNA_SAD"/>
    <property type="match status" value="1"/>
</dbReference>
<dbReference type="PRINTS" id="PR01047">
    <property type="entry name" value="TRNASYNTHTHR"/>
</dbReference>
<dbReference type="SMART" id="SM00863">
    <property type="entry name" value="tRNA_SAD"/>
    <property type="match status" value="1"/>
</dbReference>
<dbReference type="SUPFAM" id="SSF52954">
    <property type="entry name" value="Class II aaRS ABD-related"/>
    <property type="match status" value="1"/>
</dbReference>
<dbReference type="SUPFAM" id="SSF55681">
    <property type="entry name" value="Class II aaRS and biotin synthetases"/>
    <property type="match status" value="1"/>
</dbReference>
<dbReference type="SUPFAM" id="SSF81271">
    <property type="entry name" value="TGS-like"/>
    <property type="match status" value="1"/>
</dbReference>
<dbReference type="SUPFAM" id="SSF55186">
    <property type="entry name" value="ThrRS/AlaRS common domain"/>
    <property type="match status" value="1"/>
</dbReference>
<dbReference type="PROSITE" id="PS50862">
    <property type="entry name" value="AA_TRNA_LIGASE_II"/>
    <property type="match status" value="1"/>
</dbReference>
<dbReference type="PROSITE" id="PS51880">
    <property type="entry name" value="TGS"/>
    <property type="match status" value="1"/>
</dbReference>